<feature type="chain" id="PRO_0000214477" description="Probable Fe(2+)-trafficking protein">
    <location>
        <begin position="1"/>
        <end position="90"/>
    </location>
</feature>
<organism>
    <name type="scientific">Coxiella burnetii (strain RSA 493 / Nine Mile phase I)</name>
    <dbReference type="NCBI Taxonomy" id="227377"/>
    <lineage>
        <taxon>Bacteria</taxon>
        <taxon>Pseudomonadati</taxon>
        <taxon>Pseudomonadota</taxon>
        <taxon>Gammaproteobacteria</taxon>
        <taxon>Legionellales</taxon>
        <taxon>Coxiellaceae</taxon>
        <taxon>Coxiella</taxon>
    </lineage>
</organism>
<dbReference type="EMBL" id="AE016828">
    <property type="protein sequence ID" value="AAO90467.1"/>
    <property type="molecule type" value="Genomic_DNA"/>
</dbReference>
<dbReference type="RefSeq" id="NP_819953.1">
    <property type="nucleotide sequence ID" value="NC_002971.4"/>
</dbReference>
<dbReference type="RefSeq" id="WP_005768500.1">
    <property type="nucleotide sequence ID" value="NZ_CDBG01000001.1"/>
</dbReference>
<dbReference type="SMR" id="Q83D06"/>
<dbReference type="STRING" id="227377.CBU_0941"/>
<dbReference type="DNASU" id="1208835"/>
<dbReference type="EnsemblBacteria" id="AAO90467">
    <property type="protein sequence ID" value="AAO90467"/>
    <property type="gene ID" value="CBU_0941"/>
</dbReference>
<dbReference type="GeneID" id="1208835"/>
<dbReference type="KEGG" id="cbu:CBU_0941"/>
<dbReference type="PATRIC" id="fig|227377.7.peg.931"/>
<dbReference type="eggNOG" id="COG2924">
    <property type="taxonomic scope" value="Bacteria"/>
</dbReference>
<dbReference type="HOGENOM" id="CLU_170994_0_0_6"/>
<dbReference type="OrthoDB" id="9804318at2"/>
<dbReference type="Proteomes" id="UP000002671">
    <property type="component" value="Chromosome"/>
</dbReference>
<dbReference type="GO" id="GO:0005829">
    <property type="term" value="C:cytosol"/>
    <property type="evidence" value="ECO:0000318"/>
    <property type="project" value="GO_Central"/>
</dbReference>
<dbReference type="GO" id="GO:0005506">
    <property type="term" value="F:iron ion binding"/>
    <property type="evidence" value="ECO:0007669"/>
    <property type="project" value="UniProtKB-UniRule"/>
</dbReference>
<dbReference type="GO" id="GO:0034599">
    <property type="term" value="P:cellular response to oxidative stress"/>
    <property type="evidence" value="ECO:0000318"/>
    <property type="project" value="GO_Central"/>
</dbReference>
<dbReference type="FunFam" id="1.10.3880.10:FF:000001">
    <property type="entry name" value="Probable Fe(2+)-trafficking protein"/>
    <property type="match status" value="1"/>
</dbReference>
<dbReference type="Gene3D" id="1.10.3880.10">
    <property type="entry name" value="Fe(II) trafficking protein YggX"/>
    <property type="match status" value="1"/>
</dbReference>
<dbReference type="HAMAP" id="MF_00686">
    <property type="entry name" value="Fe_traffic_YggX"/>
    <property type="match status" value="1"/>
</dbReference>
<dbReference type="InterPro" id="IPR007457">
    <property type="entry name" value="Fe_traffick_prot_YggX"/>
</dbReference>
<dbReference type="InterPro" id="IPR036766">
    <property type="entry name" value="Fe_traffick_prot_YggX_sf"/>
</dbReference>
<dbReference type="NCBIfam" id="NF003817">
    <property type="entry name" value="PRK05408.1"/>
    <property type="match status" value="1"/>
</dbReference>
<dbReference type="PANTHER" id="PTHR36965">
    <property type="entry name" value="FE(2+)-TRAFFICKING PROTEIN-RELATED"/>
    <property type="match status" value="1"/>
</dbReference>
<dbReference type="PANTHER" id="PTHR36965:SF1">
    <property type="entry name" value="FE(2+)-TRAFFICKING PROTEIN-RELATED"/>
    <property type="match status" value="1"/>
</dbReference>
<dbReference type="Pfam" id="PF04362">
    <property type="entry name" value="Iron_traffic"/>
    <property type="match status" value="1"/>
</dbReference>
<dbReference type="PIRSF" id="PIRSF029827">
    <property type="entry name" value="Fe_traffic_YggX"/>
    <property type="match status" value="1"/>
</dbReference>
<dbReference type="SUPFAM" id="SSF111148">
    <property type="entry name" value="YggX-like"/>
    <property type="match status" value="1"/>
</dbReference>
<proteinExistence type="inferred from homology"/>
<protein>
    <recommendedName>
        <fullName evidence="1">Probable Fe(2+)-trafficking protein</fullName>
    </recommendedName>
</protein>
<name>FETP_COXBU</name>
<keyword id="KW-0408">Iron</keyword>
<keyword id="KW-1185">Reference proteome</keyword>
<reference key="1">
    <citation type="journal article" date="2003" name="Proc. Natl. Acad. Sci. U.S.A.">
        <title>Complete genome sequence of the Q-fever pathogen, Coxiella burnetii.</title>
        <authorList>
            <person name="Seshadri R."/>
            <person name="Paulsen I.T."/>
            <person name="Eisen J.A."/>
            <person name="Read T.D."/>
            <person name="Nelson K.E."/>
            <person name="Nelson W.C."/>
            <person name="Ward N.L."/>
            <person name="Tettelin H."/>
            <person name="Davidsen T.M."/>
            <person name="Beanan M.J."/>
            <person name="DeBoy R.T."/>
            <person name="Daugherty S.C."/>
            <person name="Brinkac L.M."/>
            <person name="Madupu R."/>
            <person name="Dodson R.J."/>
            <person name="Khouri H.M."/>
            <person name="Lee K.H."/>
            <person name="Carty H.A."/>
            <person name="Scanlan D."/>
            <person name="Heinzen R.A."/>
            <person name="Thompson H.A."/>
            <person name="Samuel J.E."/>
            <person name="Fraser C.M."/>
            <person name="Heidelberg J.F."/>
        </authorList>
    </citation>
    <scope>NUCLEOTIDE SEQUENCE [LARGE SCALE GENOMIC DNA]</scope>
    <source>
        <strain>RSA 493 / Nine Mile phase I</strain>
    </source>
</reference>
<accession>Q83D06</accession>
<sequence>MTRRIICQKLGKEADALNYSPYPGELGERIYNHISEQAWQAWLSHQTMLINEYRLSLIDPKARQFLEQEMINFLFGTGSEKPAGYTSEKE</sequence>
<gene>
    <name type="ordered locus">CBU_0941</name>
</gene>
<evidence type="ECO:0000255" key="1">
    <source>
        <dbReference type="HAMAP-Rule" id="MF_00686"/>
    </source>
</evidence>
<comment type="function">
    <text evidence="1">Could be a mediator in iron transactions between iron acquisition and iron-requiring processes, such as synthesis and/or repair of Fe-S clusters in biosynthetic enzymes.</text>
</comment>
<comment type="similarity">
    <text evidence="1">Belongs to the Fe(2+)-trafficking protein family.</text>
</comment>